<protein>
    <recommendedName>
        <fullName evidence="1">Small ribosomal subunit protein uS15</fullName>
    </recommendedName>
    <alternativeName>
        <fullName evidence="2">30S ribosomal protein S15</fullName>
    </alternativeName>
</protein>
<keyword id="KW-0687">Ribonucleoprotein</keyword>
<keyword id="KW-0689">Ribosomal protein</keyword>
<keyword id="KW-0694">RNA-binding</keyword>
<keyword id="KW-0699">rRNA-binding</keyword>
<gene>
    <name evidence="1" type="primary">rpsO</name>
    <name type="ordered locus">CCA_00761</name>
</gene>
<feature type="chain" id="PRO_0000115415" description="Small ribosomal subunit protein uS15">
    <location>
        <begin position="1"/>
        <end position="89"/>
    </location>
</feature>
<sequence length="89" mass="10430">MSLDKGTKEEITKKFQLHEKDTGSADVQIAILTEHITELKEHLKRSPKDQNSRLALLKLVGQRRKLLEYLNSTDTERYKNLITRLNLRK</sequence>
<evidence type="ECO:0000255" key="1">
    <source>
        <dbReference type="HAMAP-Rule" id="MF_01343"/>
    </source>
</evidence>
<evidence type="ECO:0000305" key="2"/>
<comment type="function">
    <text evidence="1">One of the primary rRNA binding proteins, it binds directly to 16S rRNA where it helps nucleate assembly of the platform of the 30S subunit by binding and bridging several RNA helices of the 16S rRNA.</text>
</comment>
<comment type="function">
    <text evidence="1">Forms an intersubunit bridge (bridge B4) with the 23S rRNA of the 50S subunit in the ribosome.</text>
</comment>
<comment type="subunit">
    <text evidence="1">Part of the 30S ribosomal subunit. Forms a bridge to the 50S subunit in the 70S ribosome, contacting the 23S rRNA.</text>
</comment>
<comment type="similarity">
    <text evidence="1">Belongs to the universal ribosomal protein uS15 family.</text>
</comment>
<name>RS15_CHLCV</name>
<proteinExistence type="inferred from homology"/>
<accession>Q822C2</accession>
<reference key="1">
    <citation type="journal article" date="2003" name="Nucleic Acids Res.">
        <title>Genome sequence of Chlamydophila caviae (Chlamydia psittaci GPIC): examining the role of niche-specific genes in the evolution of the Chlamydiaceae.</title>
        <authorList>
            <person name="Read T.D."/>
            <person name="Myers G.S.A."/>
            <person name="Brunham R.C."/>
            <person name="Nelson W.C."/>
            <person name="Paulsen I.T."/>
            <person name="Heidelberg J.F."/>
            <person name="Holtzapple E.K."/>
            <person name="Khouri H.M."/>
            <person name="Federova N.B."/>
            <person name="Carty H.A."/>
            <person name="Umayam L.A."/>
            <person name="Haft D.H."/>
            <person name="Peterson J.D."/>
            <person name="Beanan M.J."/>
            <person name="White O."/>
            <person name="Salzberg S.L."/>
            <person name="Hsia R.-C."/>
            <person name="McClarty G."/>
            <person name="Rank R.G."/>
            <person name="Bavoil P.M."/>
            <person name="Fraser C.M."/>
        </authorList>
    </citation>
    <scope>NUCLEOTIDE SEQUENCE [LARGE SCALE GENOMIC DNA]</scope>
    <source>
        <strain>ATCC VR-813 / DSM 19441 / 03DC25 / GPIC</strain>
    </source>
</reference>
<dbReference type="EMBL" id="AE015925">
    <property type="protein sequence ID" value="AAP05502.1"/>
    <property type="molecule type" value="Genomic_DNA"/>
</dbReference>
<dbReference type="RefSeq" id="WP_011006716.1">
    <property type="nucleotide sequence ID" value="NC_003361.3"/>
</dbReference>
<dbReference type="SMR" id="Q822C2"/>
<dbReference type="STRING" id="227941.CCA_00761"/>
<dbReference type="KEGG" id="cca:CCA_00761"/>
<dbReference type="eggNOG" id="COG0184">
    <property type="taxonomic scope" value="Bacteria"/>
</dbReference>
<dbReference type="HOGENOM" id="CLU_148518_0_0_0"/>
<dbReference type="OrthoDB" id="9799262at2"/>
<dbReference type="Proteomes" id="UP000002193">
    <property type="component" value="Chromosome"/>
</dbReference>
<dbReference type="GO" id="GO:0022627">
    <property type="term" value="C:cytosolic small ribosomal subunit"/>
    <property type="evidence" value="ECO:0007669"/>
    <property type="project" value="TreeGrafter"/>
</dbReference>
<dbReference type="GO" id="GO:0019843">
    <property type="term" value="F:rRNA binding"/>
    <property type="evidence" value="ECO:0007669"/>
    <property type="project" value="UniProtKB-UniRule"/>
</dbReference>
<dbReference type="GO" id="GO:0003735">
    <property type="term" value="F:structural constituent of ribosome"/>
    <property type="evidence" value="ECO:0007669"/>
    <property type="project" value="InterPro"/>
</dbReference>
<dbReference type="GO" id="GO:0006412">
    <property type="term" value="P:translation"/>
    <property type="evidence" value="ECO:0007669"/>
    <property type="project" value="UniProtKB-UniRule"/>
</dbReference>
<dbReference type="CDD" id="cd00353">
    <property type="entry name" value="Ribosomal_S15p_S13e"/>
    <property type="match status" value="1"/>
</dbReference>
<dbReference type="FunFam" id="1.10.287.10:FF:000002">
    <property type="entry name" value="30S ribosomal protein S15"/>
    <property type="match status" value="1"/>
</dbReference>
<dbReference type="Gene3D" id="6.10.250.3130">
    <property type="match status" value="1"/>
</dbReference>
<dbReference type="Gene3D" id="1.10.287.10">
    <property type="entry name" value="S15/NS1, RNA-binding"/>
    <property type="match status" value="1"/>
</dbReference>
<dbReference type="HAMAP" id="MF_01343_B">
    <property type="entry name" value="Ribosomal_uS15_B"/>
    <property type="match status" value="1"/>
</dbReference>
<dbReference type="InterPro" id="IPR000589">
    <property type="entry name" value="Ribosomal_uS15"/>
</dbReference>
<dbReference type="InterPro" id="IPR005290">
    <property type="entry name" value="Ribosomal_uS15_bac-type"/>
</dbReference>
<dbReference type="InterPro" id="IPR009068">
    <property type="entry name" value="uS15_NS1_RNA-bd_sf"/>
</dbReference>
<dbReference type="NCBIfam" id="TIGR00952">
    <property type="entry name" value="S15_bact"/>
    <property type="match status" value="1"/>
</dbReference>
<dbReference type="PANTHER" id="PTHR23321">
    <property type="entry name" value="RIBOSOMAL PROTEIN S15, BACTERIAL AND ORGANELLAR"/>
    <property type="match status" value="1"/>
</dbReference>
<dbReference type="PANTHER" id="PTHR23321:SF26">
    <property type="entry name" value="SMALL RIBOSOMAL SUBUNIT PROTEIN US15M"/>
    <property type="match status" value="1"/>
</dbReference>
<dbReference type="Pfam" id="PF00312">
    <property type="entry name" value="Ribosomal_S15"/>
    <property type="match status" value="1"/>
</dbReference>
<dbReference type="SMART" id="SM01387">
    <property type="entry name" value="Ribosomal_S15"/>
    <property type="match status" value="1"/>
</dbReference>
<dbReference type="SUPFAM" id="SSF47060">
    <property type="entry name" value="S15/NS1 RNA-binding domain"/>
    <property type="match status" value="1"/>
</dbReference>
<dbReference type="PROSITE" id="PS00362">
    <property type="entry name" value="RIBOSOMAL_S15"/>
    <property type="match status" value="1"/>
</dbReference>
<organism>
    <name type="scientific">Chlamydia caviae (strain ATCC VR-813 / DSM 19441 / 03DC25 / GPIC)</name>
    <name type="common">Chlamydophila caviae</name>
    <dbReference type="NCBI Taxonomy" id="227941"/>
    <lineage>
        <taxon>Bacteria</taxon>
        <taxon>Pseudomonadati</taxon>
        <taxon>Chlamydiota</taxon>
        <taxon>Chlamydiia</taxon>
        <taxon>Chlamydiales</taxon>
        <taxon>Chlamydiaceae</taxon>
        <taxon>Chlamydia/Chlamydophila group</taxon>
        <taxon>Chlamydia</taxon>
    </lineage>
</organism>